<keyword id="KW-0067">ATP-binding</keyword>
<keyword id="KW-0418">Kinase</keyword>
<keyword id="KW-0547">Nucleotide-binding</keyword>
<keyword id="KW-0597">Phosphoprotein</keyword>
<keyword id="KW-1185">Reference proteome</keyword>
<keyword id="KW-0808">Transferase</keyword>
<keyword id="KW-0902">Two-component regulatory system</keyword>
<organism>
    <name type="scientific">Pseudomonas aeruginosa (strain ATCC 15692 / DSM 22644 / CIP 104116 / JCM 14847 / LMG 12228 / 1C / PRS 101 / PAO1)</name>
    <dbReference type="NCBI Taxonomy" id="208964"/>
    <lineage>
        <taxon>Bacteria</taxon>
        <taxon>Pseudomonadati</taxon>
        <taxon>Pseudomonadota</taxon>
        <taxon>Gammaproteobacteria</taxon>
        <taxon>Pseudomonadales</taxon>
        <taxon>Pseudomonadaceae</taxon>
        <taxon>Pseudomonas</taxon>
    </lineage>
</organism>
<protein>
    <recommendedName>
        <fullName evidence="9">Two-component sensor PprA</fullName>
        <ecNumber evidence="10">2.7.13.3</ecNumber>
    </recommendedName>
</protein>
<sequence>MFEFSRSSSAEAERPEPFSQEGPALWSASLRSWDLCFEMDEQDRVIRVGGRQAYRLQCAHGLGEQPRPFAEYLERRAPGAPTLAGLRRGERLDLTLRSDAAAPLTCRFQPMQPLDGLGRSLLLGMDISDLNWQSDSQQHQLQSLSLGKLILSRLRHVSHGHLAEAVQEILESLSGAFQMQAIALLLGDGKGFCTVFASHVRPGSDSLLRPPLQLADDDLREGAGARLLRRGEGASTLLRQIGEDALYLVPATMRGGRLGALLVRPMSLEQLAQGPAPQDWQYLAELLANQVADRCELHEQHDSSRKLGLLQEMIGGGWWRYWAEQELFELAPALHDSLGLTGEYRRVPLEHLQGLLQPADADELGLRLRASLRSGQALAQDLCLRQPDSRGERRWLRIEGRPLGRGSALGLSGVLLDISEGRRQEERAQAAHARLRSLIDSAPVVIYVQRVEQGHLVPEFYSESASNLLGLDLQGQSWQALAERVHPDDLEAFFARGRELLREGRVKTRYRLADGQGNWHWLYDEAKLLRDAQGLPSEAVGLWLDVTEQHLAAQRIAESEERYRVLVEDSPALICRYTADLVLTYVNRTFADSLATSPERLVGRRLDEWLAAEDASALRARLLGSPREGASEVPELRFNLPGQRFLWLVWAERPLFDARGELCEVQAVGRDNTPVRRAQQQLAQGAKMASLGEMVSGLAHEVKQPLHVLRMTLFNMRQRMNSVGLDGDYLGEKLERMDAQVLRVDRLVSHLGVFSRKSALEALPFDPYAAFEGALGLLGEGLRQHAIEVECPAPTQRMVVRGQADQLEQVIINLLANARDALLGNPGLASRRVRLEQVACREPGWVELHVHDNGGGIEPLLLERIFEPFFTTKAEGKGTGLGLSVSHDLVRNMGGSLTAANQGEGALFVVRLPLAAPAEAGG</sequence>
<comment type="function">
    <text evidence="5 6 7 8">Member of the two-component regulatory system PprA/PprB involved in biofilm formation by controlling the expression of many related genes including type IVb pili major subunit flp pilin, adhesin bapA or cupE fimbriae (PubMed:21091863, PubMed:23209420, PubMed:31492668). Functions as a heme sensor histidine kinase which is autophosphorylated at a histidine residue and transfers its phosphate group to PprB (PubMed:12499175).</text>
</comment>
<comment type="catalytic activity">
    <reaction evidence="10">
        <text>ATP + protein L-histidine = ADP + protein N-phospho-L-histidine.</text>
        <dbReference type="EC" id="2.7.13.3"/>
    </reaction>
</comment>
<comment type="induction">
    <text evidence="8">By carbon starvation. This increased expression is controlled by RpoS.</text>
</comment>
<comment type="PTM">
    <text evidence="5">Autophosphorylated.</text>
</comment>
<comment type="disruption phenotype">
    <text evidence="8">Mutant exhibits similar responses to carbon starvation stress suggesting that PprB-mediated transcriptional response is not transmitted through PprA.</text>
</comment>
<reference key="1">
    <citation type="journal article" date="2000" name="Nature">
        <title>Complete genome sequence of Pseudomonas aeruginosa PAO1, an opportunistic pathogen.</title>
        <authorList>
            <person name="Stover C.K."/>
            <person name="Pham X.-Q.T."/>
            <person name="Erwin A.L."/>
            <person name="Mizoguchi S.D."/>
            <person name="Warrener P."/>
            <person name="Hickey M.J."/>
            <person name="Brinkman F.S.L."/>
            <person name="Hufnagle W.O."/>
            <person name="Kowalik D.J."/>
            <person name="Lagrou M."/>
            <person name="Garber R.L."/>
            <person name="Goltry L."/>
            <person name="Tolentino E."/>
            <person name="Westbrock-Wadman S."/>
            <person name="Yuan Y."/>
            <person name="Brody L.L."/>
            <person name="Coulter S.N."/>
            <person name="Folger K.R."/>
            <person name="Kas A."/>
            <person name="Larbig K."/>
            <person name="Lim R.M."/>
            <person name="Smith K.A."/>
            <person name="Spencer D.H."/>
            <person name="Wong G.K.-S."/>
            <person name="Wu Z."/>
            <person name="Paulsen I.T."/>
            <person name="Reizer J."/>
            <person name="Saier M.H. Jr."/>
            <person name="Hancock R.E.W."/>
            <person name="Lory S."/>
            <person name="Olson M.V."/>
        </authorList>
    </citation>
    <scope>NUCLEOTIDE SEQUENCE [LARGE SCALE GENOMIC DNA]</scope>
    <source>
        <strain>ATCC 15692 / DSM 22644 / CIP 104116 / JCM 14847 / LMG 12228 / 1C / PRS 101 / PAO1</strain>
    </source>
</reference>
<reference key="2">
    <citation type="journal article" date="2003" name="Antimicrob. Agents Chemother.">
        <title>Regulation of membrane permeability by a two-component regulatory system in Pseudomonas aeruginosa.</title>
        <authorList>
            <person name="Wang Y."/>
            <person name="Ha U."/>
            <person name="Zeng L."/>
            <person name="Jin S."/>
        </authorList>
    </citation>
    <scope>FUNCTION</scope>
    <scope>PHOSPHORYLATION</scope>
    <scope>CATALYTIC ACTIVITY</scope>
    <source>
        <strain>PAK</strain>
    </source>
</reference>
<reference key="3">
    <citation type="journal article" date="2012" name="PLoS Pathog.">
        <title>Unique biofilm signature, drug susceptibility and decreased virulence in Drosophila through the Pseudomonas aeruginosa two-component system PprAB.</title>
        <authorList>
            <person name="de Bentzmann S."/>
            <person name="Giraud C."/>
            <person name="Bernard C.S."/>
            <person name="Calderon V."/>
            <person name="Ewald F."/>
            <person name="Plesiat P."/>
            <person name="Nguyen C."/>
            <person name="Grunwald D."/>
            <person name="Attree I."/>
            <person name="Jeannot K."/>
            <person name="Fauvarque M.O."/>
            <person name="Bordi C."/>
        </authorList>
    </citation>
    <scope>FUNCTION</scope>
</reference>
<reference key="4">
    <citation type="journal article" date="2011" name="Environ. Microbiol.">
        <title>The PprA-PprB two-component system activates CupE, the first non-archetypal Pseudomonas aeruginosa chaperone-usher pathway system assembling fimbriae.</title>
        <authorList>
            <person name="Giraud C."/>
            <person name="Bernard C.S."/>
            <person name="Calderon V."/>
            <person name="Yang L."/>
            <person name="Filloux A."/>
            <person name="Molin S."/>
            <person name="Fichant G."/>
            <person name="Bordi C."/>
            <person name="de Bentzmann S."/>
        </authorList>
    </citation>
    <scope>FUNCTION</scope>
</reference>
<reference key="5">
    <citation type="journal article" date="2019" name="Appl. Environ. Microbiol.">
        <title>Carbon starvation induces the expression of PprB-regulated genes in Pseudomonas aeruginosa.</title>
        <authorList>
            <person name="Wang C."/>
            <person name="Chen W."/>
            <person name="Xia A."/>
            <person name="Zhang R."/>
            <person name="Huang Y."/>
            <person name="Yang S."/>
            <person name="Ni L."/>
            <person name="Jin F."/>
        </authorList>
    </citation>
    <scope>FUNCTION</scope>
    <scope>INDUCTION BY CARBON STARVATION</scope>
    <scope>DISRUPTION PHENOTYPE</scope>
</reference>
<gene>
    <name evidence="9" type="primary">pprA</name>
    <name type="ordered locus">PA4293</name>
</gene>
<feature type="chain" id="PRO_0000448553" description="Two-component sensor PprA">
    <location>
        <begin position="1"/>
        <end position="922"/>
    </location>
</feature>
<feature type="domain" description="PAC 1" evidence="3">
    <location>
        <begin position="506"/>
        <end position="558"/>
    </location>
</feature>
<feature type="domain" description="PAS" evidence="2">
    <location>
        <begin position="559"/>
        <end position="622"/>
    </location>
</feature>
<feature type="domain" description="PAC 2" evidence="3">
    <location>
        <begin position="632"/>
        <end position="684"/>
    </location>
</feature>
<feature type="domain" description="Histidine kinase" evidence="1">
    <location>
        <begin position="697"/>
        <end position="916"/>
    </location>
</feature>
<feature type="region of interest" description="Disordered" evidence="4">
    <location>
        <begin position="1"/>
        <end position="22"/>
    </location>
</feature>
<feature type="compositionally biased region" description="Low complexity" evidence="4">
    <location>
        <begin position="1"/>
        <end position="10"/>
    </location>
</feature>
<feature type="modified residue" description="Phosphohistidine; by autocatalysis" evidence="1">
    <location>
        <position position="700"/>
    </location>
</feature>
<evidence type="ECO:0000255" key="1">
    <source>
        <dbReference type="PROSITE-ProRule" id="PRU00107"/>
    </source>
</evidence>
<evidence type="ECO:0000255" key="2">
    <source>
        <dbReference type="PROSITE-ProRule" id="PRU00140"/>
    </source>
</evidence>
<evidence type="ECO:0000255" key="3">
    <source>
        <dbReference type="PROSITE-ProRule" id="PRU00141"/>
    </source>
</evidence>
<evidence type="ECO:0000256" key="4">
    <source>
        <dbReference type="SAM" id="MobiDB-lite"/>
    </source>
</evidence>
<evidence type="ECO:0000269" key="5">
    <source>
    </source>
</evidence>
<evidence type="ECO:0000269" key="6">
    <source>
    </source>
</evidence>
<evidence type="ECO:0000269" key="7">
    <source>
    </source>
</evidence>
<evidence type="ECO:0000269" key="8">
    <source>
    </source>
</evidence>
<evidence type="ECO:0000303" key="9">
    <source>
    </source>
</evidence>
<evidence type="ECO:0000305" key="10">
    <source>
    </source>
</evidence>
<dbReference type="EC" id="2.7.13.3" evidence="10"/>
<dbReference type="EMBL" id="AE004091">
    <property type="protein sequence ID" value="AAG07681.1"/>
    <property type="molecule type" value="Genomic_DNA"/>
</dbReference>
<dbReference type="PIR" id="G83109">
    <property type="entry name" value="G83109"/>
</dbReference>
<dbReference type="RefSeq" id="NP_252983.1">
    <property type="nucleotide sequence ID" value="NC_002516.2"/>
</dbReference>
<dbReference type="RefSeq" id="WP_003115766.1">
    <property type="nucleotide sequence ID" value="NZ_QZGE01000034.1"/>
</dbReference>
<dbReference type="SMR" id="Q9HWA7"/>
<dbReference type="STRING" id="208964.PA4293"/>
<dbReference type="PaxDb" id="208964-PA4293"/>
<dbReference type="GeneID" id="881624"/>
<dbReference type="KEGG" id="pae:PA4293"/>
<dbReference type="PATRIC" id="fig|208964.12.peg.4495"/>
<dbReference type="PseudoCAP" id="PA4293"/>
<dbReference type="HOGENOM" id="CLU_317582_0_0_6"/>
<dbReference type="InParanoid" id="Q9HWA7"/>
<dbReference type="OrthoDB" id="1931120at2"/>
<dbReference type="PhylomeDB" id="Q9HWA7"/>
<dbReference type="BioCyc" id="PAER208964:G1FZ6-4377-MONOMER"/>
<dbReference type="Proteomes" id="UP000002438">
    <property type="component" value="Chromosome"/>
</dbReference>
<dbReference type="GO" id="GO:0005524">
    <property type="term" value="F:ATP binding"/>
    <property type="evidence" value="ECO:0007669"/>
    <property type="project" value="UniProtKB-KW"/>
</dbReference>
<dbReference type="GO" id="GO:0000155">
    <property type="term" value="F:phosphorelay sensor kinase activity"/>
    <property type="evidence" value="ECO:0000314"/>
    <property type="project" value="PseudoCAP"/>
</dbReference>
<dbReference type="CDD" id="cd00082">
    <property type="entry name" value="HisKA"/>
    <property type="match status" value="1"/>
</dbReference>
<dbReference type="CDD" id="cd00130">
    <property type="entry name" value="PAS"/>
    <property type="match status" value="2"/>
</dbReference>
<dbReference type="FunFam" id="3.30.565.10:FF:000154">
    <property type="entry name" value="PAS domain-containing sensor histidine kinase"/>
    <property type="match status" value="1"/>
</dbReference>
<dbReference type="FunFam" id="3.30.450.20:FF:000534">
    <property type="entry name" value="Two-component sensor PprA"/>
    <property type="match status" value="1"/>
</dbReference>
<dbReference type="Gene3D" id="1.10.287.130">
    <property type="match status" value="1"/>
</dbReference>
<dbReference type="Gene3D" id="3.30.565.10">
    <property type="entry name" value="Histidine kinase-like ATPase, C-terminal domain"/>
    <property type="match status" value="1"/>
</dbReference>
<dbReference type="Gene3D" id="3.30.450.20">
    <property type="entry name" value="PAS domain"/>
    <property type="match status" value="3"/>
</dbReference>
<dbReference type="InterPro" id="IPR036890">
    <property type="entry name" value="HATPase_C_sf"/>
</dbReference>
<dbReference type="InterPro" id="IPR005467">
    <property type="entry name" value="His_kinase_dom"/>
</dbReference>
<dbReference type="InterPro" id="IPR003661">
    <property type="entry name" value="HisK_dim/P_dom"/>
</dbReference>
<dbReference type="InterPro" id="IPR036097">
    <property type="entry name" value="HisK_dim/P_sf"/>
</dbReference>
<dbReference type="InterPro" id="IPR001610">
    <property type="entry name" value="PAC"/>
</dbReference>
<dbReference type="InterPro" id="IPR000014">
    <property type="entry name" value="PAS"/>
</dbReference>
<dbReference type="InterPro" id="IPR000700">
    <property type="entry name" value="PAS-assoc_C"/>
</dbReference>
<dbReference type="InterPro" id="IPR035965">
    <property type="entry name" value="PAS-like_dom_sf"/>
</dbReference>
<dbReference type="InterPro" id="IPR013656">
    <property type="entry name" value="PAS_4"/>
</dbReference>
<dbReference type="InterPro" id="IPR013655">
    <property type="entry name" value="PAS_fold_3"/>
</dbReference>
<dbReference type="InterPro" id="IPR004358">
    <property type="entry name" value="Sig_transdc_His_kin-like_C"/>
</dbReference>
<dbReference type="NCBIfam" id="TIGR00229">
    <property type="entry name" value="sensory_box"/>
    <property type="match status" value="1"/>
</dbReference>
<dbReference type="PANTHER" id="PTHR43065">
    <property type="entry name" value="SENSOR HISTIDINE KINASE"/>
    <property type="match status" value="1"/>
</dbReference>
<dbReference type="PANTHER" id="PTHR43065:SF42">
    <property type="entry name" value="TWO-COMPONENT SENSOR PPRA"/>
    <property type="match status" value="1"/>
</dbReference>
<dbReference type="Pfam" id="PF02518">
    <property type="entry name" value="HATPase_c"/>
    <property type="match status" value="1"/>
</dbReference>
<dbReference type="Pfam" id="PF00512">
    <property type="entry name" value="HisKA"/>
    <property type="match status" value="1"/>
</dbReference>
<dbReference type="Pfam" id="PF08447">
    <property type="entry name" value="PAS_3"/>
    <property type="match status" value="1"/>
</dbReference>
<dbReference type="Pfam" id="PF08448">
    <property type="entry name" value="PAS_4"/>
    <property type="match status" value="1"/>
</dbReference>
<dbReference type="PRINTS" id="PR00344">
    <property type="entry name" value="BCTRLSENSOR"/>
</dbReference>
<dbReference type="SMART" id="SM00387">
    <property type="entry name" value="HATPase_c"/>
    <property type="match status" value="1"/>
</dbReference>
<dbReference type="SMART" id="SM00388">
    <property type="entry name" value="HisKA"/>
    <property type="match status" value="1"/>
</dbReference>
<dbReference type="SMART" id="SM00086">
    <property type="entry name" value="PAC"/>
    <property type="match status" value="3"/>
</dbReference>
<dbReference type="SMART" id="SM00091">
    <property type="entry name" value="PAS"/>
    <property type="match status" value="2"/>
</dbReference>
<dbReference type="SUPFAM" id="SSF55874">
    <property type="entry name" value="ATPase domain of HSP90 chaperone/DNA topoisomerase II/histidine kinase"/>
    <property type="match status" value="1"/>
</dbReference>
<dbReference type="SUPFAM" id="SSF47384">
    <property type="entry name" value="Homodimeric domain of signal transducing histidine kinase"/>
    <property type="match status" value="1"/>
</dbReference>
<dbReference type="SUPFAM" id="SSF55785">
    <property type="entry name" value="PYP-like sensor domain (PAS domain)"/>
    <property type="match status" value="2"/>
</dbReference>
<dbReference type="PROSITE" id="PS50109">
    <property type="entry name" value="HIS_KIN"/>
    <property type="match status" value="1"/>
</dbReference>
<dbReference type="PROSITE" id="PS50113">
    <property type="entry name" value="PAC"/>
    <property type="match status" value="2"/>
</dbReference>
<dbReference type="PROSITE" id="PS50112">
    <property type="entry name" value="PAS"/>
    <property type="match status" value="1"/>
</dbReference>
<proteinExistence type="evidence at protein level"/>
<accession>Q9HWA7</accession>
<name>PPRA_PSEAE</name>